<feature type="signal peptide" evidence="2">
    <location>
        <begin position="1"/>
        <end position="24"/>
    </location>
</feature>
<feature type="chain" id="PRO_5000395646" description="Kunitz-type serine protease inhibitor mulgin-5">
    <location>
        <begin position="25"/>
        <end position="83"/>
    </location>
</feature>
<feature type="domain" description="BPTI/Kunitz inhibitor" evidence="3">
    <location>
        <begin position="31"/>
        <end position="81"/>
    </location>
</feature>
<feature type="site" description="Reactive bond for trypsin" evidence="1">
    <location>
        <begin position="41"/>
        <end position="42"/>
    </location>
</feature>
<feature type="disulfide bond" evidence="3">
    <location>
        <begin position="31"/>
        <end position="81"/>
    </location>
</feature>
<feature type="disulfide bond" evidence="3">
    <location>
        <begin position="40"/>
        <end position="64"/>
    </location>
</feature>
<feature type="disulfide bond" evidence="3">
    <location>
        <begin position="56"/>
        <end position="77"/>
    </location>
</feature>
<name>VKT5_PSEAU</name>
<reference key="1">
    <citation type="journal article" date="2008" name="Cell. Mol. Life Sci.">
        <title>Common evolution of waprin and Kunitz-like toxin families in Australian venomous snakes.</title>
        <authorList>
            <person name="St Pierre L."/>
            <person name="Earl S.T."/>
            <person name="Filippovich I."/>
            <person name="Sorokina N."/>
            <person name="Masci P.P."/>
            <person name="De Jersey J."/>
            <person name="Lavin M.F."/>
        </authorList>
    </citation>
    <scope>NUCLEOTIDE SEQUENCE [GENOMIC DNA]</scope>
</reference>
<organism>
    <name type="scientific">Pseudechis australis</name>
    <name type="common">Mulga snake</name>
    <name type="synonym">King brown snake</name>
    <dbReference type="NCBI Taxonomy" id="8670"/>
    <lineage>
        <taxon>Eukaryota</taxon>
        <taxon>Metazoa</taxon>
        <taxon>Chordata</taxon>
        <taxon>Craniata</taxon>
        <taxon>Vertebrata</taxon>
        <taxon>Euteleostomi</taxon>
        <taxon>Lepidosauria</taxon>
        <taxon>Squamata</taxon>
        <taxon>Bifurcata</taxon>
        <taxon>Unidentata</taxon>
        <taxon>Episquamata</taxon>
        <taxon>Toxicofera</taxon>
        <taxon>Serpentes</taxon>
        <taxon>Colubroidea</taxon>
        <taxon>Elapidae</taxon>
        <taxon>Hydrophiinae</taxon>
        <taxon>Pseudechis</taxon>
    </lineage>
</organism>
<comment type="function">
    <text evidence="1">Serine protease inhibitor.</text>
</comment>
<comment type="subcellular location">
    <subcellularLocation>
        <location evidence="1">Secreted</location>
    </subcellularLocation>
</comment>
<comment type="tissue specificity">
    <text>Expressed by the venom gland.</text>
</comment>
<comment type="similarity">
    <text evidence="4">Belongs to the venom Kunitz-type family.</text>
</comment>
<accession>B5L5Q8</accession>
<protein>
    <recommendedName>
        <fullName>Kunitz-type serine protease inhibitor mulgin-5</fullName>
    </recommendedName>
</protein>
<dbReference type="EMBL" id="EU401846">
    <property type="protein sequence ID" value="ACC77795.1"/>
    <property type="molecule type" value="Genomic_DNA"/>
</dbReference>
<dbReference type="SMR" id="B5L5Q8"/>
<dbReference type="MEROPS" id="I02.052"/>
<dbReference type="GO" id="GO:0005615">
    <property type="term" value="C:extracellular space"/>
    <property type="evidence" value="ECO:0007669"/>
    <property type="project" value="TreeGrafter"/>
</dbReference>
<dbReference type="GO" id="GO:0004867">
    <property type="term" value="F:serine-type endopeptidase inhibitor activity"/>
    <property type="evidence" value="ECO:0007669"/>
    <property type="project" value="UniProtKB-KW"/>
</dbReference>
<dbReference type="GO" id="GO:0090729">
    <property type="term" value="F:toxin activity"/>
    <property type="evidence" value="ECO:0007669"/>
    <property type="project" value="UniProtKB-KW"/>
</dbReference>
<dbReference type="CDD" id="cd22594">
    <property type="entry name" value="Kunitz_textilinin-like"/>
    <property type="match status" value="1"/>
</dbReference>
<dbReference type="FunFam" id="4.10.410.10:FF:000004">
    <property type="entry name" value="Tissue factor pathway inhibitor"/>
    <property type="match status" value="1"/>
</dbReference>
<dbReference type="Gene3D" id="4.10.410.10">
    <property type="entry name" value="Pancreatic trypsin inhibitor Kunitz domain"/>
    <property type="match status" value="1"/>
</dbReference>
<dbReference type="InterPro" id="IPR002223">
    <property type="entry name" value="Kunitz_BPTI"/>
</dbReference>
<dbReference type="InterPro" id="IPR036880">
    <property type="entry name" value="Kunitz_BPTI_sf"/>
</dbReference>
<dbReference type="InterPro" id="IPR020901">
    <property type="entry name" value="Prtase_inh_Kunz-CS"/>
</dbReference>
<dbReference type="InterPro" id="IPR050098">
    <property type="entry name" value="TFPI/VKTCI-like"/>
</dbReference>
<dbReference type="PANTHER" id="PTHR10083:SF374">
    <property type="entry name" value="BPTI_KUNITZ INHIBITOR DOMAIN-CONTAINING PROTEIN"/>
    <property type="match status" value="1"/>
</dbReference>
<dbReference type="PANTHER" id="PTHR10083">
    <property type="entry name" value="KUNITZ-TYPE PROTEASE INHIBITOR-RELATED"/>
    <property type="match status" value="1"/>
</dbReference>
<dbReference type="Pfam" id="PF00014">
    <property type="entry name" value="Kunitz_BPTI"/>
    <property type="match status" value="1"/>
</dbReference>
<dbReference type="PRINTS" id="PR00759">
    <property type="entry name" value="BASICPTASE"/>
</dbReference>
<dbReference type="SMART" id="SM00131">
    <property type="entry name" value="KU"/>
    <property type="match status" value="1"/>
</dbReference>
<dbReference type="SUPFAM" id="SSF57362">
    <property type="entry name" value="BPTI-like"/>
    <property type="match status" value="1"/>
</dbReference>
<dbReference type="PROSITE" id="PS00280">
    <property type="entry name" value="BPTI_KUNITZ_1"/>
    <property type="match status" value="1"/>
</dbReference>
<dbReference type="PROSITE" id="PS50279">
    <property type="entry name" value="BPTI_KUNITZ_2"/>
    <property type="match status" value="1"/>
</dbReference>
<sequence length="83" mass="9218">MSSGGLLLLLGLLTLWEGLTPVSSKDRPNFCHLPHDPGPCKGNFQAFYYHPVRRTCLEFIYGGCQGNPNNFKTIDECKRTCAA</sequence>
<proteinExistence type="inferred from homology"/>
<evidence type="ECO:0000250" key="1"/>
<evidence type="ECO:0000255" key="2"/>
<evidence type="ECO:0000255" key="3">
    <source>
        <dbReference type="PROSITE-ProRule" id="PRU00031"/>
    </source>
</evidence>
<evidence type="ECO:0000305" key="4"/>
<keyword id="KW-1015">Disulfide bond</keyword>
<keyword id="KW-0646">Protease inhibitor</keyword>
<keyword id="KW-0964">Secreted</keyword>
<keyword id="KW-0722">Serine protease inhibitor</keyword>
<keyword id="KW-0732">Signal</keyword>
<keyword id="KW-0800">Toxin</keyword>